<name>EFEU_SHISS</name>
<evidence type="ECO:0000250" key="1"/>
<evidence type="ECO:0000255" key="2"/>
<evidence type="ECO:0000305" key="3"/>
<keyword id="KW-0997">Cell inner membrane</keyword>
<keyword id="KW-1003">Cell membrane</keyword>
<keyword id="KW-0406">Ion transport</keyword>
<keyword id="KW-0408">Iron</keyword>
<keyword id="KW-0410">Iron transport</keyword>
<keyword id="KW-0472">Membrane</keyword>
<keyword id="KW-1185">Reference proteome</keyword>
<keyword id="KW-0812">Transmembrane</keyword>
<keyword id="KW-1133">Transmembrane helix</keyword>
<keyword id="KW-0813">Transport</keyword>
<protein>
    <recommendedName>
        <fullName>Ferrous iron permease EfeU</fullName>
    </recommendedName>
    <alternativeName>
        <fullName>Fe(2+) ion permease EfeU</fullName>
    </alternativeName>
    <alternativeName>
        <fullName>Ferrous iron uptake protein</fullName>
    </alternativeName>
</protein>
<organism>
    <name type="scientific">Shigella sonnei (strain Ss046)</name>
    <dbReference type="NCBI Taxonomy" id="300269"/>
    <lineage>
        <taxon>Bacteria</taxon>
        <taxon>Pseudomonadati</taxon>
        <taxon>Pseudomonadota</taxon>
        <taxon>Gammaproteobacteria</taxon>
        <taxon>Enterobacterales</taxon>
        <taxon>Enterobacteriaceae</taxon>
        <taxon>Shigella</taxon>
    </lineage>
</organism>
<sequence length="276" mass="30344">MFVPFLIMLREGLEAALIVSLIASYLKRTQRGRWIGVMWIGVLLAAALCLGLGIFINETTGEFPQKEQELFEGIVAVIAVVILTWMVFWMRKVSRNVKVQLEQAVDSALQRGNHHGWALVMMVFFAVAREGLESVFFLLAAFQQDVGIWPPLGAMLGLATAVVLGFLLYWGGIRLNLGAFFKWTSLFILFVAAGLAAGAIRAFHEAGLWNHFQEIAFDMSAVLSTHSLFGTLMEGIFGYQEAPSVSEVAVWFIYLIPALVAFALPPRAGATASRSA</sequence>
<feature type="chain" id="PRO_0000277548" description="Ferrous iron permease EfeU">
    <location>
        <begin position="1"/>
        <end position="276"/>
    </location>
</feature>
<feature type="topological domain" description="Periplasmic" evidence="2">
    <location>
        <position position="1"/>
    </location>
</feature>
<feature type="transmembrane region" description="Helical" evidence="2">
    <location>
        <begin position="2"/>
        <end position="22"/>
    </location>
</feature>
<feature type="topological domain" description="Cytoplasmic" evidence="2">
    <location>
        <begin position="23"/>
        <end position="34"/>
    </location>
</feature>
<feature type="transmembrane region" description="Helical" evidence="2">
    <location>
        <begin position="35"/>
        <end position="55"/>
    </location>
</feature>
<feature type="topological domain" description="Periplasmic" evidence="2">
    <location>
        <begin position="56"/>
        <end position="69"/>
    </location>
</feature>
<feature type="transmembrane region" description="Helical" evidence="2">
    <location>
        <begin position="70"/>
        <end position="90"/>
    </location>
</feature>
<feature type="topological domain" description="Cytoplasmic" evidence="2">
    <location>
        <begin position="91"/>
        <end position="118"/>
    </location>
</feature>
<feature type="transmembrane region" description="Helical" evidence="2">
    <location>
        <begin position="119"/>
        <end position="139"/>
    </location>
</feature>
<feature type="topological domain" description="Periplasmic" evidence="2">
    <location>
        <begin position="140"/>
        <end position="147"/>
    </location>
</feature>
<feature type="transmembrane region" description="Helical" evidence="2">
    <location>
        <begin position="148"/>
        <end position="168"/>
    </location>
</feature>
<feature type="topological domain" description="Cytoplasmic" evidence="2">
    <location>
        <begin position="169"/>
        <end position="179"/>
    </location>
</feature>
<feature type="transmembrane region" description="Helical" evidence="2">
    <location>
        <begin position="180"/>
        <end position="200"/>
    </location>
</feature>
<feature type="topological domain" description="Periplasmic" evidence="2">
    <location>
        <begin position="201"/>
        <end position="244"/>
    </location>
</feature>
<feature type="transmembrane region" description="Helical" evidence="2">
    <location>
        <begin position="245"/>
        <end position="265"/>
    </location>
</feature>
<feature type="topological domain" description="Cytoplasmic" evidence="2">
    <location>
        <begin position="266"/>
        <end position="276"/>
    </location>
</feature>
<reference key="1">
    <citation type="journal article" date="2005" name="Nucleic Acids Res.">
        <title>Genome dynamics and diversity of Shigella species, the etiologic agents of bacillary dysentery.</title>
        <authorList>
            <person name="Yang F."/>
            <person name="Yang J."/>
            <person name="Zhang X."/>
            <person name="Chen L."/>
            <person name="Jiang Y."/>
            <person name="Yan Y."/>
            <person name="Tang X."/>
            <person name="Wang J."/>
            <person name="Xiong Z."/>
            <person name="Dong J."/>
            <person name="Xue Y."/>
            <person name="Zhu Y."/>
            <person name="Xu X."/>
            <person name="Sun L."/>
            <person name="Chen S."/>
            <person name="Nie H."/>
            <person name="Peng J."/>
            <person name="Xu J."/>
            <person name="Wang Y."/>
            <person name="Yuan Z."/>
            <person name="Wen Y."/>
            <person name="Yao Z."/>
            <person name="Shen Y."/>
            <person name="Qiang B."/>
            <person name="Hou Y."/>
            <person name="Yu J."/>
            <person name="Jin Q."/>
        </authorList>
    </citation>
    <scope>NUCLEOTIDE SEQUENCE [LARGE SCALE GENOMIC DNA]</scope>
    <source>
        <strain>Ss046</strain>
    </source>
</reference>
<gene>
    <name type="primary">efeU</name>
    <name type="synonym">ycdN</name>
    <name type="ordered locus">SSON_1036</name>
</gene>
<dbReference type="EMBL" id="CP000038">
    <property type="protein sequence ID" value="AAZ87764.1"/>
    <property type="status" value="ALT_INIT"/>
    <property type="molecule type" value="Genomic_DNA"/>
</dbReference>
<dbReference type="RefSeq" id="WP_000497942.1">
    <property type="nucleotide sequence ID" value="NC_007384.1"/>
</dbReference>
<dbReference type="SMR" id="Q3Z398"/>
<dbReference type="GeneID" id="93776392"/>
<dbReference type="KEGG" id="ssn:SSON_1036"/>
<dbReference type="HOGENOM" id="CLU_077905_0_0_6"/>
<dbReference type="Proteomes" id="UP000002529">
    <property type="component" value="Chromosome"/>
</dbReference>
<dbReference type="GO" id="GO:0033573">
    <property type="term" value="C:high-affinity iron permease complex"/>
    <property type="evidence" value="ECO:0007669"/>
    <property type="project" value="InterPro"/>
</dbReference>
<dbReference type="GO" id="GO:0015093">
    <property type="term" value="F:ferrous iron transmembrane transporter activity"/>
    <property type="evidence" value="ECO:0007669"/>
    <property type="project" value="TreeGrafter"/>
</dbReference>
<dbReference type="InterPro" id="IPR005217">
    <property type="entry name" value="EfeU/FTR1-like"/>
</dbReference>
<dbReference type="InterPro" id="IPR004923">
    <property type="entry name" value="FTR1/Fip1/EfeU"/>
</dbReference>
<dbReference type="InterPro" id="IPR036259">
    <property type="entry name" value="MFS_trans_sf"/>
</dbReference>
<dbReference type="NCBIfam" id="NF041756">
    <property type="entry name" value="EfeU"/>
    <property type="match status" value="1"/>
</dbReference>
<dbReference type="NCBIfam" id="TIGR00145">
    <property type="entry name" value="EfeU/Ftr1 family ferrous iron transporter subunit"/>
    <property type="match status" value="1"/>
</dbReference>
<dbReference type="PANTHER" id="PTHR31632">
    <property type="entry name" value="IRON TRANSPORTER FTH1"/>
    <property type="match status" value="1"/>
</dbReference>
<dbReference type="PANTHER" id="PTHR31632:SF2">
    <property type="entry name" value="PLASMA MEMBRANE IRON PERMEASE"/>
    <property type="match status" value="1"/>
</dbReference>
<dbReference type="Pfam" id="PF03239">
    <property type="entry name" value="FTR1"/>
    <property type="match status" value="1"/>
</dbReference>
<dbReference type="SUPFAM" id="SSF103473">
    <property type="entry name" value="MFS general substrate transporter"/>
    <property type="match status" value="1"/>
</dbReference>
<comment type="function">
    <text evidence="1">Uptake of Fe(2+) ions across the membrane.</text>
</comment>
<comment type="subunit">
    <text evidence="1">Part of a ferrous iron transporter composed of EfeU, EfeO and EfeB.</text>
</comment>
<comment type="subcellular location">
    <subcellularLocation>
        <location evidence="1">Cell inner membrane</location>
        <topology evidence="1">Multi-pass membrane protein</topology>
    </subcellularLocation>
</comment>
<comment type="similarity">
    <text evidence="3">Belongs to the oxidase-dependent Fe transporter (OFeT) (TC 9.A.10.1) family.</text>
</comment>
<comment type="sequence caution" evidence="3">
    <conflict type="erroneous initiation">
        <sequence resource="EMBL-CDS" id="AAZ87764"/>
    </conflict>
    <text>Extended N-terminus.</text>
</comment>
<accession>Q3Z398</accession>
<proteinExistence type="inferred from homology"/>